<protein>
    <recommendedName>
        <fullName>NADH-quinone oxidoreductase subunit J</fullName>
        <ecNumber>7.1.1.-</ecNumber>
    </recommendedName>
    <alternativeName>
        <fullName>NADH dehydrogenase I subunit J</fullName>
    </alternativeName>
    <alternativeName>
        <fullName>NDH-1 subunit J</fullName>
    </alternativeName>
</protein>
<reference key="1">
    <citation type="journal article" date="2000" name="Nature">
        <title>Complete genome sequence of Pseudomonas aeruginosa PAO1, an opportunistic pathogen.</title>
        <authorList>
            <person name="Stover C.K."/>
            <person name="Pham X.-Q.T."/>
            <person name="Erwin A.L."/>
            <person name="Mizoguchi S.D."/>
            <person name="Warrener P."/>
            <person name="Hickey M.J."/>
            <person name="Brinkman F.S.L."/>
            <person name="Hufnagle W.O."/>
            <person name="Kowalik D.J."/>
            <person name="Lagrou M."/>
            <person name="Garber R.L."/>
            <person name="Goltry L."/>
            <person name="Tolentino E."/>
            <person name="Westbrock-Wadman S."/>
            <person name="Yuan Y."/>
            <person name="Brody L.L."/>
            <person name="Coulter S.N."/>
            <person name="Folger K.R."/>
            <person name="Kas A."/>
            <person name="Larbig K."/>
            <person name="Lim R.M."/>
            <person name="Smith K.A."/>
            <person name="Spencer D.H."/>
            <person name="Wong G.K.-S."/>
            <person name="Wu Z."/>
            <person name="Paulsen I.T."/>
            <person name="Reizer J."/>
            <person name="Saier M.H. Jr."/>
            <person name="Hancock R.E.W."/>
            <person name="Lory S."/>
            <person name="Olson M.V."/>
        </authorList>
    </citation>
    <scope>NUCLEOTIDE SEQUENCE [LARGE SCALE GENOMIC DNA]</scope>
    <source>
        <strain>ATCC 15692 / DSM 22644 / CIP 104116 / JCM 14847 / LMG 12228 / 1C / PRS 101 / PAO1</strain>
    </source>
</reference>
<name>NUOJ_PSEAE</name>
<proteinExistence type="inferred from homology"/>
<evidence type="ECO:0000250" key="1"/>
<evidence type="ECO:0000255" key="2"/>
<evidence type="ECO:0000305" key="3"/>
<dbReference type="EC" id="7.1.1.-"/>
<dbReference type="EMBL" id="AE004091">
    <property type="protein sequence ID" value="AAG06033.1"/>
    <property type="molecule type" value="Genomic_DNA"/>
</dbReference>
<dbReference type="PIR" id="B83315">
    <property type="entry name" value="B83315"/>
</dbReference>
<dbReference type="RefSeq" id="NP_251335.1">
    <property type="nucleotide sequence ID" value="NC_002516.2"/>
</dbReference>
<dbReference type="RefSeq" id="WP_003090473.1">
    <property type="nucleotide sequence ID" value="NZ_QZGE01000008.1"/>
</dbReference>
<dbReference type="SMR" id="Q9I0J3"/>
<dbReference type="FunCoup" id="Q9I0J3">
    <property type="interactions" value="374"/>
</dbReference>
<dbReference type="STRING" id="208964.PA2645"/>
<dbReference type="PaxDb" id="208964-PA2645"/>
<dbReference type="GeneID" id="77220818"/>
<dbReference type="GeneID" id="882354"/>
<dbReference type="KEGG" id="pae:PA2645"/>
<dbReference type="PATRIC" id="fig|208964.12.peg.2768"/>
<dbReference type="PseudoCAP" id="PA2645"/>
<dbReference type="HOGENOM" id="CLU_085957_0_1_6"/>
<dbReference type="InParanoid" id="Q9I0J3"/>
<dbReference type="PhylomeDB" id="Q9I0J3"/>
<dbReference type="BioCyc" id="PAER208964:G1FZ6-2685-MONOMER"/>
<dbReference type="PHI-base" id="PHI:8938"/>
<dbReference type="Proteomes" id="UP000002438">
    <property type="component" value="Chromosome"/>
</dbReference>
<dbReference type="GO" id="GO:0005886">
    <property type="term" value="C:plasma membrane"/>
    <property type="evidence" value="ECO:0007669"/>
    <property type="project" value="UniProtKB-SubCell"/>
</dbReference>
<dbReference type="GO" id="GO:0045271">
    <property type="term" value="C:respiratory chain complex I"/>
    <property type="evidence" value="ECO:0000318"/>
    <property type="project" value="GO_Central"/>
</dbReference>
<dbReference type="GO" id="GO:0008137">
    <property type="term" value="F:NADH dehydrogenase (ubiquinone) activity"/>
    <property type="evidence" value="ECO:0007669"/>
    <property type="project" value="InterPro"/>
</dbReference>
<dbReference type="GO" id="GO:0048038">
    <property type="term" value="F:quinone binding"/>
    <property type="evidence" value="ECO:0007669"/>
    <property type="project" value="UniProtKB-KW"/>
</dbReference>
<dbReference type="FunFam" id="1.20.120.1200:FF:000001">
    <property type="entry name" value="NADH-quinone oxidoreductase subunit J"/>
    <property type="match status" value="1"/>
</dbReference>
<dbReference type="Gene3D" id="1.20.120.1200">
    <property type="entry name" value="NADH-ubiquinone/plastoquinone oxidoreductase chain 6, subunit NuoJ"/>
    <property type="match status" value="1"/>
</dbReference>
<dbReference type="InterPro" id="IPR001457">
    <property type="entry name" value="NADH_UbQ/plastoQ_OxRdtase_su6"/>
</dbReference>
<dbReference type="InterPro" id="IPR042106">
    <property type="entry name" value="Nuo/plastoQ_OxRdtase_6_NuoJ"/>
</dbReference>
<dbReference type="NCBIfam" id="NF005162">
    <property type="entry name" value="PRK06638.1-1"/>
    <property type="match status" value="1"/>
</dbReference>
<dbReference type="PANTHER" id="PTHR33269">
    <property type="entry name" value="NADH-UBIQUINONE OXIDOREDUCTASE CHAIN 6"/>
    <property type="match status" value="1"/>
</dbReference>
<dbReference type="PANTHER" id="PTHR33269:SF17">
    <property type="entry name" value="NADH-UBIQUINONE OXIDOREDUCTASE CHAIN 6"/>
    <property type="match status" value="1"/>
</dbReference>
<dbReference type="Pfam" id="PF00499">
    <property type="entry name" value="Oxidored_q3"/>
    <property type="match status" value="1"/>
</dbReference>
<comment type="function">
    <text evidence="1">NDH-1 shuttles electrons from NADH, via FMN and iron-sulfur (Fe-S) centers, to quinones in the respiratory chain. The immediate electron acceptor for the enzyme in this species is believed to be ubiquinone. Couples the redox reaction to proton translocation (for every two electrons transferred, four hydrogen ions are translocated across the cytoplasmic membrane), and thus conserves the redox energy in a proton gradient (By similarity).</text>
</comment>
<comment type="catalytic activity">
    <reaction>
        <text>a quinone + NADH + 5 H(+)(in) = a quinol + NAD(+) + 4 H(+)(out)</text>
        <dbReference type="Rhea" id="RHEA:57888"/>
        <dbReference type="ChEBI" id="CHEBI:15378"/>
        <dbReference type="ChEBI" id="CHEBI:24646"/>
        <dbReference type="ChEBI" id="CHEBI:57540"/>
        <dbReference type="ChEBI" id="CHEBI:57945"/>
        <dbReference type="ChEBI" id="CHEBI:132124"/>
    </reaction>
</comment>
<comment type="subunit">
    <text evidence="1">Composed of 13 different subunits. Subunits NuoA, H, J, K, L, M, N constitute the membrane sector of the complex (By similarity).</text>
</comment>
<comment type="subcellular location">
    <subcellularLocation>
        <location evidence="1">Cell inner membrane</location>
        <topology evidence="1">Multi-pass membrane protein</topology>
    </subcellularLocation>
</comment>
<comment type="similarity">
    <text evidence="3">Belongs to the complex I subunit 6 family.</text>
</comment>
<feature type="chain" id="PRO_0000287838" description="NADH-quinone oxidoreductase subunit J">
    <location>
        <begin position="1"/>
        <end position="166"/>
    </location>
</feature>
<feature type="transmembrane region" description="Helical" evidence="2">
    <location>
        <begin position="1"/>
        <end position="21"/>
    </location>
</feature>
<feature type="transmembrane region" description="Helical" evidence="2">
    <location>
        <begin position="28"/>
        <end position="48"/>
    </location>
</feature>
<feature type="transmembrane region" description="Helical" evidence="2">
    <location>
        <begin position="54"/>
        <end position="74"/>
    </location>
</feature>
<feature type="transmembrane region" description="Helical" evidence="2">
    <location>
        <begin position="92"/>
        <end position="112"/>
    </location>
</feature>
<feature type="transmembrane region" description="Helical" evidence="2">
    <location>
        <begin position="134"/>
        <end position="154"/>
    </location>
</feature>
<sequence>MEFAFYFAAGVAVLATLRVITNSNPVHALLYLIISLLAISMTFFSLGAPFAGALEIIVYAGAIMVLFVFVVMMLNLGPAVVEQERKWLTPGIWVGPSALALVLLVELLVVLARTPSGAGIGHTTVDAKAVGISLYGPYLLVVELASMLLLAALVAAYHLGRQDAKQ</sequence>
<accession>Q9I0J3</accession>
<organism>
    <name type="scientific">Pseudomonas aeruginosa (strain ATCC 15692 / DSM 22644 / CIP 104116 / JCM 14847 / LMG 12228 / 1C / PRS 101 / PAO1)</name>
    <dbReference type="NCBI Taxonomy" id="208964"/>
    <lineage>
        <taxon>Bacteria</taxon>
        <taxon>Pseudomonadati</taxon>
        <taxon>Pseudomonadota</taxon>
        <taxon>Gammaproteobacteria</taxon>
        <taxon>Pseudomonadales</taxon>
        <taxon>Pseudomonadaceae</taxon>
        <taxon>Pseudomonas</taxon>
    </lineage>
</organism>
<gene>
    <name type="primary">nuoJ</name>
    <name type="ordered locus">PA2645</name>
</gene>
<keyword id="KW-0997">Cell inner membrane</keyword>
<keyword id="KW-1003">Cell membrane</keyword>
<keyword id="KW-0472">Membrane</keyword>
<keyword id="KW-0520">NAD</keyword>
<keyword id="KW-0874">Quinone</keyword>
<keyword id="KW-1185">Reference proteome</keyword>
<keyword id="KW-1278">Translocase</keyword>
<keyword id="KW-0812">Transmembrane</keyword>
<keyword id="KW-1133">Transmembrane helix</keyword>
<keyword id="KW-0830">Ubiquinone</keyword>